<feature type="chain" id="PRO_0000334546" description="Serpin-Z1">
    <location>
        <begin position="1"/>
        <end position="385"/>
    </location>
</feature>
<feature type="region of interest" description="RCL">
    <location>
        <begin position="317"/>
        <end position="341"/>
    </location>
</feature>
<feature type="site" description="Reactive bond" evidence="2">
    <location>
        <begin position="331"/>
        <end position="332"/>
    </location>
</feature>
<keyword id="KW-0646">Protease inhibitor</keyword>
<keyword id="KW-1185">Reference proteome</keyword>
<keyword id="KW-0722">Serine protease inhibitor</keyword>
<comment type="function">
    <text evidence="1">Probable serine protease inhibitor.</text>
</comment>
<comment type="induction">
    <text evidence="3">By beta-amino-butyric acid (BABA) and infection by Pseudomonas pathogen.</text>
</comment>
<comment type="domain">
    <text evidence="1">The reactive center loop (RCL) extends out from the body of the protein and directs binding to the target protease. The protease cleaves the serpin at the reactive site within the RCL, establishing a covalent linkage between the carboxyl group of the serpin reactive site and the serine hydroxyl of the protease. The resulting inactive serpin-protease complex is highly stable (By similarity).</text>
</comment>
<comment type="similarity">
    <text evidence="4">Belongs to the serpin family.</text>
</comment>
<comment type="sequence caution" evidence="4">
    <conflict type="erroneous gene model prediction">
        <sequence resource="EMBL-CDS" id="AAF24568"/>
    </conflict>
</comment>
<dbReference type="EMBL" id="AC007764">
    <property type="protein sequence ID" value="AAF24568.1"/>
    <property type="status" value="ALT_SEQ"/>
    <property type="molecule type" value="Genomic_DNA"/>
</dbReference>
<dbReference type="EMBL" id="CP002684">
    <property type="protein sequence ID" value="AEE34182.1"/>
    <property type="molecule type" value="Genomic_DNA"/>
</dbReference>
<dbReference type="PIR" id="B96665">
    <property type="entry name" value="B96665"/>
</dbReference>
<dbReference type="RefSeq" id="NP_176586.1">
    <property type="nucleotide sequence ID" value="NM_105076.2"/>
</dbReference>
<dbReference type="SMR" id="Q9SH52"/>
<dbReference type="FunCoup" id="Q9SH52">
    <property type="interactions" value="34"/>
</dbReference>
<dbReference type="STRING" id="3702.Q9SH52"/>
<dbReference type="iPTMnet" id="Q9SH52"/>
<dbReference type="PaxDb" id="3702-AT1G64030.1"/>
<dbReference type="ProteomicsDB" id="226913"/>
<dbReference type="EnsemblPlants" id="AT1G64030.1">
    <property type="protein sequence ID" value="AT1G64030.1"/>
    <property type="gene ID" value="AT1G64030"/>
</dbReference>
<dbReference type="GeneID" id="842706"/>
<dbReference type="Gramene" id="AT1G64030.1">
    <property type="protein sequence ID" value="AT1G64030.1"/>
    <property type="gene ID" value="AT1G64030"/>
</dbReference>
<dbReference type="KEGG" id="ath:AT1G64030"/>
<dbReference type="Araport" id="AT1G64030"/>
<dbReference type="TAIR" id="AT1G64030">
    <property type="gene designation" value="SRP3"/>
</dbReference>
<dbReference type="eggNOG" id="KOG2392">
    <property type="taxonomic scope" value="Eukaryota"/>
</dbReference>
<dbReference type="HOGENOM" id="CLU_023330_4_0_1"/>
<dbReference type="InParanoid" id="Q9SH52"/>
<dbReference type="OMA" id="AMQFKIE"/>
<dbReference type="PhylomeDB" id="Q9SH52"/>
<dbReference type="PRO" id="PR:Q9SH52"/>
<dbReference type="Proteomes" id="UP000006548">
    <property type="component" value="Chromosome 1"/>
</dbReference>
<dbReference type="ExpressionAtlas" id="Q9SH52">
    <property type="expression patterns" value="baseline and differential"/>
</dbReference>
<dbReference type="GO" id="GO:0005829">
    <property type="term" value="C:cytosol"/>
    <property type="evidence" value="ECO:0000314"/>
    <property type="project" value="TAIR"/>
</dbReference>
<dbReference type="GO" id="GO:0005615">
    <property type="term" value="C:extracellular space"/>
    <property type="evidence" value="ECO:0007669"/>
    <property type="project" value="InterPro"/>
</dbReference>
<dbReference type="GO" id="GO:0004867">
    <property type="term" value="F:serine-type endopeptidase inhibitor activity"/>
    <property type="evidence" value="ECO:0007669"/>
    <property type="project" value="UniProtKB-KW"/>
</dbReference>
<dbReference type="GO" id="GO:0006974">
    <property type="term" value="P:DNA damage response"/>
    <property type="evidence" value="ECO:0000270"/>
    <property type="project" value="TAIR"/>
</dbReference>
<dbReference type="GO" id="GO:0006281">
    <property type="term" value="P:DNA repair"/>
    <property type="evidence" value="ECO:0000315"/>
    <property type="project" value="TAIR"/>
</dbReference>
<dbReference type="CDD" id="cd02043">
    <property type="entry name" value="serpinP_plants"/>
    <property type="match status" value="1"/>
</dbReference>
<dbReference type="FunFam" id="2.10.310.10:FF:000001">
    <property type="entry name" value="Serpin family A member 1"/>
    <property type="match status" value="1"/>
</dbReference>
<dbReference type="Gene3D" id="2.30.39.10">
    <property type="entry name" value="Alpha-1-antitrypsin, domain 1"/>
    <property type="match status" value="1"/>
</dbReference>
<dbReference type="Gene3D" id="3.30.497.10">
    <property type="entry name" value="Antithrombin, subunit I, domain 2"/>
    <property type="match status" value="1"/>
</dbReference>
<dbReference type="InterPro" id="IPR023795">
    <property type="entry name" value="Serpin_CS"/>
</dbReference>
<dbReference type="InterPro" id="IPR023796">
    <property type="entry name" value="Serpin_dom"/>
</dbReference>
<dbReference type="InterPro" id="IPR000215">
    <property type="entry name" value="Serpin_fam"/>
</dbReference>
<dbReference type="InterPro" id="IPR036186">
    <property type="entry name" value="Serpin_sf"/>
</dbReference>
<dbReference type="InterPro" id="IPR042178">
    <property type="entry name" value="Serpin_sf_1"/>
</dbReference>
<dbReference type="InterPro" id="IPR042185">
    <property type="entry name" value="Serpin_sf_2"/>
</dbReference>
<dbReference type="PANTHER" id="PTHR11461">
    <property type="entry name" value="SERINE PROTEASE INHIBITOR, SERPIN"/>
    <property type="match status" value="1"/>
</dbReference>
<dbReference type="PANTHER" id="PTHR11461:SF321">
    <property type="entry name" value="SERPIN-Z1"/>
    <property type="match status" value="1"/>
</dbReference>
<dbReference type="Pfam" id="PF00079">
    <property type="entry name" value="Serpin"/>
    <property type="match status" value="2"/>
</dbReference>
<dbReference type="SMART" id="SM00093">
    <property type="entry name" value="SERPIN"/>
    <property type="match status" value="1"/>
</dbReference>
<dbReference type="SUPFAM" id="SSF56574">
    <property type="entry name" value="Serpins"/>
    <property type="match status" value="1"/>
</dbReference>
<dbReference type="PROSITE" id="PS00284">
    <property type="entry name" value="SERPIN"/>
    <property type="match status" value="1"/>
</dbReference>
<protein>
    <recommendedName>
        <fullName>Serpin-Z1</fullName>
    </recommendedName>
    <alternativeName>
        <fullName>ArathZ1</fullName>
    </alternativeName>
</protein>
<accession>Q9SH52</accession>
<sequence>MDVREAMKNQTHVAMILSGHVLSSAPKDSNVIFSPASINSAITMHAAGPGGDLVSGQILSFLRSSSIDELKTVFRELASVVYADRSATGGPKITAANGLWIDKSLPTDPKFKDLFENFFKAVYVPVDFRSEAEEVRKEVNSWVEHHTNNLIKDLLPDGSVTSLTNKIYANALSFKGAWKRPFEKYYTRDNDFYLVNGTSVSVPFMSSYENQYVRAYDGFKVLRLPYQRGSDDTNRKFSMYFYLPDKKDGLDDLLEKMASTPGFLDSHIPTYRDELEKFRIPKFKIEFGFSVTSVLDRLGLRSMSMYHKACVEIDEEGAEAAAATADGDCGCSLDFVEPPKKIDFVADHPFLFLIREEKTGTVLFVGQIFDPSGPCSGSNSDSDDY</sequence>
<name>SPZ1_ARATH</name>
<proteinExistence type="evidence at transcript level"/>
<gene>
    <name type="ordered locus">At1g64030</name>
    <name type="ORF">F22C12.22</name>
</gene>
<organism>
    <name type="scientific">Arabidopsis thaliana</name>
    <name type="common">Mouse-ear cress</name>
    <dbReference type="NCBI Taxonomy" id="3702"/>
    <lineage>
        <taxon>Eukaryota</taxon>
        <taxon>Viridiplantae</taxon>
        <taxon>Streptophyta</taxon>
        <taxon>Embryophyta</taxon>
        <taxon>Tracheophyta</taxon>
        <taxon>Spermatophyta</taxon>
        <taxon>Magnoliopsida</taxon>
        <taxon>eudicotyledons</taxon>
        <taxon>Gunneridae</taxon>
        <taxon>Pentapetalae</taxon>
        <taxon>rosids</taxon>
        <taxon>malvids</taxon>
        <taxon>Brassicales</taxon>
        <taxon>Brassicaceae</taxon>
        <taxon>Camelineae</taxon>
        <taxon>Arabidopsis</taxon>
    </lineage>
</organism>
<evidence type="ECO:0000250" key="1"/>
<evidence type="ECO:0000255" key="2"/>
<evidence type="ECO:0000269" key="3">
    <source>
    </source>
</evidence>
<evidence type="ECO:0000305" key="4"/>
<reference key="1">
    <citation type="journal article" date="2000" name="Nature">
        <title>Sequence and analysis of chromosome 1 of the plant Arabidopsis thaliana.</title>
        <authorList>
            <person name="Theologis A."/>
            <person name="Ecker J.R."/>
            <person name="Palm C.J."/>
            <person name="Federspiel N.A."/>
            <person name="Kaul S."/>
            <person name="White O."/>
            <person name="Alonso J."/>
            <person name="Altafi H."/>
            <person name="Araujo R."/>
            <person name="Bowman C.L."/>
            <person name="Brooks S.Y."/>
            <person name="Buehler E."/>
            <person name="Chan A."/>
            <person name="Chao Q."/>
            <person name="Chen H."/>
            <person name="Cheuk R.F."/>
            <person name="Chin C.W."/>
            <person name="Chung M.K."/>
            <person name="Conn L."/>
            <person name="Conway A.B."/>
            <person name="Conway A.R."/>
            <person name="Creasy T.H."/>
            <person name="Dewar K."/>
            <person name="Dunn P."/>
            <person name="Etgu P."/>
            <person name="Feldblyum T.V."/>
            <person name="Feng J.-D."/>
            <person name="Fong B."/>
            <person name="Fujii C.Y."/>
            <person name="Gill J.E."/>
            <person name="Goldsmith A.D."/>
            <person name="Haas B."/>
            <person name="Hansen N.F."/>
            <person name="Hughes B."/>
            <person name="Huizar L."/>
            <person name="Hunter J.L."/>
            <person name="Jenkins J."/>
            <person name="Johnson-Hopson C."/>
            <person name="Khan S."/>
            <person name="Khaykin E."/>
            <person name="Kim C.J."/>
            <person name="Koo H.L."/>
            <person name="Kremenetskaia I."/>
            <person name="Kurtz D.B."/>
            <person name="Kwan A."/>
            <person name="Lam B."/>
            <person name="Langin-Hooper S."/>
            <person name="Lee A."/>
            <person name="Lee J.M."/>
            <person name="Lenz C.A."/>
            <person name="Li J.H."/>
            <person name="Li Y.-P."/>
            <person name="Lin X."/>
            <person name="Liu S.X."/>
            <person name="Liu Z.A."/>
            <person name="Luros J.S."/>
            <person name="Maiti R."/>
            <person name="Marziali A."/>
            <person name="Militscher J."/>
            <person name="Miranda M."/>
            <person name="Nguyen M."/>
            <person name="Nierman W.C."/>
            <person name="Osborne B.I."/>
            <person name="Pai G."/>
            <person name="Peterson J."/>
            <person name="Pham P.K."/>
            <person name="Rizzo M."/>
            <person name="Rooney T."/>
            <person name="Rowley D."/>
            <person name="Sakano H."/>
            <person name="Salzberg S.L."/>
            <person name="Schwartz J.R."/>
            <person name="Shinn P."/>
            <person name="Southwick A.M."/>
            <person name="Sun H."/>
            <person name="Tallon L.J."/>
            <person name="Tambunga G."/>
            <person name="Toriumi M.J."/>
            <person name="Town C.D."/>
            <person name="Utterback T."/>
            <person name="Van Aken S."/>
            <person name="Vaysberg M."/>
            <person name="Vysotskaia V.S."/>
            <person name="Walker M."/>
            <person name="Wu D."/>
            <person name="Yu G."/>
            <person name="Fraser C.M."/>
            <person name="Venter J.C."/>
            <person name="Davis R.W."/>
        </authorList>
    </citation>
    <scope>NUCLEOTIDE SEQUENCE [LARGE SCALE GENOMIC DNA]</scope>
    <source>
        <strain>cv. Columbia</strain>
    </source>
</reference>
<reference key="2">
    <citation type="journal article" date="2017" name="Plant J.">
        <title>Araport11: a complete reannotation of the Arabidopsis thaliana reference genome.</title>
        <authorList>
            <person name="Cheng C.Y."/>
            <person name="Krishnakumar V."/>
            <person name="Chan A.P."/>
            <person name="Thibaud-Nissen F."/>
            <person name="Schobel S."/>
            <person name="Town C.D."/>
        </authorList>
    </citation>
    <scope>GENOME REANNOTATION</scope>
    <source>
        <strain>cv. Columbia</strain>
    </source>
</reference>
<reference key="3">
    <citation type="journal article" date="2008" name="Funct. Integr. Genomics">
        <title>Serpins in plants and green algae.</title>
        <authorList>
            <person name="Roberts T.H."/>
            <person name="Hejgaard J."/>
        </authorList>
    </citation>
    <scope>INDUCTION</scope>
    <scope>GENE FAMILY</scope>
    <scope>NOMENCLATURE</scope>
</reference>